<accession>B3N899</accession>
<evidence type="ECO:0000250" key="1">
    <source>
        <dbReference type="UniProtKB" id="Q9VPU8"/>
    </source>
</evidence>
<evidence type="ECO:0000255" key="2"/>
<evidence type="ECO:0000256" key="3">
    <source>
        <dbReference type="SAM" id="MobiDB-lite"/>
    </source>
</evidence>
<evidence type="ECO:0000312" key="4">
    <source>
        <dbReference type="EMBL" id="EDV57286.1"/>
    </source>
</evidence>
<feature type="chain" id="PRO_0000415652" description="KRR1 small subunit processome component homolog">
    <location>
        <begin position="1"/>
        <end position="345"/>
    </location>
</feature>
<feature type="domain" description="KH" evidence="2">
    <location>
        <begin position="125"/>
        <end position="193"/>
    </location>
</feature>
<feature type="region of interest" description="Disordered" evidence="3">
    <location>
        <begin position="232"/>
        <end position="260"/>
    </location>
</feature>
<feature type="region of interest" description="Disordered" evidence="3">
    <location>
        <begin position="273"/>
        <end position="329"/>
    </location>
</feature>
<feature type="coiled-coil region" evidence="2">
    <location>
        <begin position="270"/>
        <end position="298"/>
    </location>
</feature>
<feature type="compositionally biased region" description="Basic residues" evidence="3">
    <location>
        <begin position="232"/>
        <end position="245"/>
    </location>
</feature>
<feature type="compositionally biased region" description="Basic and acidic residues" evidence="3">
    <location>
        <begin position="276"/>
        <end position="302"/>
    </location>
</feature>
<feature type="compositionally biased region" description="Basic and acidic residues" evidence="3">
    <location>
        <begin position="315"/>
        <end position="329"/>
    </location>
</feature>
<protein>
    <recommendedName>
        <fullName evidence="1">KRR1 small subunit processome component homolog</fullName>
    </recommendedName>
    <alternativeName>
        <fullName evidence="1">KRR-R motif-containing protein 1</fullName>
    </alternativeName>
    <alternativeName>
        <fullName evidence="1">Protein dribble</fullName>
    </alternativeName>
</protein>
<dbReference type="EMBL" id="CH954177">
    <property type="protein sequence ID" value="EDV57286.1"/>
    <property type="molecule type" value="Genomic_DNA"/>
</dbReference>
<dbReference type="SMR" id="B3N899"/>
<dbReference type="EnsemblMetazoa" id="FBtr0144676">
    <property type="protein sequence ID" value="FBpp0143168"/>
    <property type="gene ID" value="FBgn0116754"/>
</dbReference>
<dbReference type="EnsemblMetazoa" id="XM_001968191.3">
    <property type="protein sequence ID" value="XP_001968227.1"/>
    <property type="gene ID" value="LOC6543024"/>
</dbReference>
<dbReference type="GeneID" id="6543024"/>
<dbReference type="KEGG" id="der:6543024"/>
<dbReference type="CTD" id="33269"/>
<dbReference type="eggNOG" id="KOG2874">
    <property type="taxonomic scope" value="Eukaryota"/>
</dbReference>
<dbReference type="HOGENOM" id="CLU_040185_0_2_1"/>
<dbReference type="OMA" id="TPDIDKW"/>
<dbReference type="OrthoDB" id="441223at2759"/>
<dbReference type="PhylomeDB" id="B3N899"/>
<dbReference type="Proteomes" id="UP000008711">
    <property type="component" value="Unassembled WGS sequence"/>
</dbReference>
<dbReference type="GO" id="GO:0005730">
    <property type="term" value="C:nucleolus"/>
    <property type="evidence" value="ECO:0007669"/>
    <property type="project" value="UniProtKB-SubCell"/>
</dbReference>
<dbReference type="GO" id="GO:0005654">
    <property type="term" value="C:nucleoplasm"/>
    <property type="evidence" value="ECO:0007669"/>
    <property type="project" value="EnsemblMetazoa"/>
</dbReference>
<dbReference type="GO" id="GO:0032040">
    <property type="term" value="C:small-subunit processome"/>
    <property type="evidence" value="ECO:0007669"/>
    <property type="project" value="TreeGrafter"/>
</dbReference>
<dbReference type="GO" id="GO:0003723">
    <property type="term" value="F:RNA binding"/>
    <property type="evidence" value="ECO:0007669"/>
    <property type="project" value="UniProtKB-KW"/>
</dbReference>
<dbReference type="GO" id="GO:0006364">
    <property type="term" value="P:rRNA processing"/>
    <property type="evidence" value="ECO:0007669"/>
    <property type="project" value="UniProtKB-KW"/>
</dbReference>
<dbReference type="CDD" id="cd22393">
    <property type="entry name" value="KH-I_KRR1_rpt1"/>
    <property type="match status" value="1"/>
</dbReference>
<dbReference type="CDD" id="cd22394">
    <property type="entry name" value="KH-I_KRR1_rpt2"/>
    <property type="match status" value="1"/>
</dbReference>
<dbReference type="FunFam" id="3.30.1370.10:FF:000011">
    <property type="entry name" value="KRR1 small subunit processome component"/>
    <property type="match status" value="1"/>
</dbReference>
<dbReference type="FunFam" id="3.30.1370.10:FF:000014">
    <property type="entry name" value="KRR1 small subunit processome component"/>
    <property type="match status" value="1"/>
</dbReference>
<dbReference type="Gene3D" id="3.30.1370.10">
    <property type="entry name" value="K Homology domain, type 1"/>
    <property type="match status" value="2"/>
</dbReference>
<dbReference type="InterPro" id="IPR004087">
    <property type="entry name" value="KH_dom"/>
</dbReference>
<dbReference type="InterPro" id="IPR036612">
    <property type="entry name" value="KH_dom_type_1_sf"/>
</dbReference>
<dbReference type="InterPro" id="IPR041174">
    <property type="entry name" value="KRR1-like_KH1"/>
</dbReference>
<dbReference type="InterPro" id="IPR048550">
    <property type="entry name" value="KRR1-like_KH1_euk"/>
</dbReference>
<dbReference type="InterPro" id="IPR048548">
    <property type="entry name" value="KRR1-like_KH2"/>
</dbReference>
<dbReference type="InterPro" id="IPR048549">
    <property type="entry name" value="KRR1-like_KH2_euk"/>
</dbReference>
<dbReference type="InterPro" id="IPR024166">
    <property type="entry name" value="rRNA_assembly_KRR1"/>
</dbReference>
<dbReference type="PANTHER" id="PTHR12581">
    <property type="entry name" value="HIV-1 REV BINDING PROTEIN 2, 3"/>
    <property type="match status" value="1"/>
</dbReference>
<dbReference type="PANTHER" id="PTHR12581:SF0">
    <property type="entry name" value="KRR1 SMALL SUBUNIT PROCESSOME COMPONENT HOMOLOG"/>
    <property type="match status" value="1"/>
</dbReference>
<dbReference type="Pfam" id="PF17903">
    <property type="entry name" value="KH_KRR1_1st"/>
    <property type="match status" value="1"/>
</dbReference>
<dbReference type="Pfam" id="PF21800">
    <property type="entry name" value="KH_KRR1_2nd"/>
    <property type="match status" value="1"/>
</dbReference>
<dbReference type="PIRSF" id="PIRSF006515">
    <property type="entry name" value="KRR1"/>
    <property type="match status" value="1"/>
</dbReference>
<dbReference type="SMART" id="SM00322">
    <property type="entry name" value="KH"/>
    <property type="match status" value="1"/>
</dbReference>
<dbReference type="SUPFAM" id="SSF54791">
    <property type="entry name" value="Eukaryotic type KH-domain (KH-domain type I)"/>
    <property type="match status" value="1"/>
</dbReference>
<gene>
    <name evidence="1" type="primary">dbe</name>
    <name evidence="1" type="synonym">dribble</name>
    <name type="ORF">GG24622</name>
</gene>
<sequence>MSESDAEETKISTDPVDNAWAMKIPTFREEDNPHGMVEESSFATLFPKYRERYLKEVWPLVEQCLAEHHLKAELDLMEGSMVVRTSRKTWDPYIIIKARDMIKLMARSVPFEQAKRVLQDDIGCDIIKIGNLVHKKEKFVKRRQRLIGPNGATLKSIELLTDCYVLVQGNTVSALGPYKGLQQVRDIVLETMNNVHPIYNIKALMIKRELMKDPRLANEDWSRFLPKFKNKNISKRKQPKVKKQKKEYTPFPPSQPESKVDKQLASGEYFLNQEQKQAKRNQERTEKQKEAAKRQDERRNKDFVPPTEESASSSLKKEDGFSSSKVDVKALKAKLIKANKKARSS</sequence>
<name>KRR1_DROER</name>
<reference evidence="4" key="1">
    <citation type="journal article" date="2007" name="Nature">
        <title>Evolution of genes and genomes on the Drosophila phylogeny.</title>
        <authorList>
            <consortium name="Drosophila 12 genomes consortium"/>
        </authorList>
    </citation>
    <scope>NUCLEOTIDE SEQUENCE [LARGE SCALE GENOMIC DNA]</scope>
    <source>
        <strain evidence="4">Tucson 14021-0224.01</strain>
    </source>
</reference>
<comment type="function">
    <text evidence="1">Required for 40S ribosome biogenesis. Involved in nucleolar processing of pre-18S ribosomal RNA and ribosome assembly. Binds to RNA. Required for female germline development, cell viability during eye development and for survival of dividing cells and epithelial cells during early wing disk development (By similarity).</text>
</comment>
<comment type="subunit">
    <text evidence="1">Monomer. Component of the ribosomal small subunit (SSU) processome (By similarity).</text>
</comment>
<comment type="subcellular location">
    <subcellularLocation>
        <location evidence="1">Nucleus</location>
        <location evidence="1">Nucleolus</location>
    </subcellularLocation>
</comment>
<comment type="similarity">
    <text evidence="2">Belongs to the KRR1 family.</text>
</comment>
<proteinExistence type="inferred from homology"/>
<keyword id="KW-0175">Coiled coil</keyword>
<keyword id="KW-0217">Developmental protein</keyword>
<keyword id="KW-0539">Nucleus</keyword>
<keyword id="KW-0687">Ribonucleoprotein</keyword>
<keyword id="KW-0690">Ribosome biogenesis</keyword>
<keyword id="KW-0694">RNA-binding</keyword>
<keyword id="KW-0698">rRNA processing</keyword>
<organism>
    <name type="scientific">Drosophila erecta</name>
    <name type="common">Fruit fly</name>
    <dbReference type="NCBI Taxonomy" id="7220"/>
    <lineage>
        <taxon>Eukaryota</taxon>
        <taxon>Metazoa</taxon>
        <taxon>Ecdysozoa</taxon>
        <taxon>Arthropoda</taxon>
        <taxon>Hexapoda</taxon>
        <taxon>Insecta</taxon>
        <taxon>Pterygota</taxon>
        <taxon>Neoptera</taxon>
        <taxon>Endopterygota</taxon>
        <taxon>Diptera</taxon>
        <taxon>Brachycera</taxon>
        <taxon>Muscomorpha</taxon>
        <taxon>Ephydroidea</taxon>
        <taxon>Drosophilidae</taxon>
        <taxon>Drosophila</taxon>
        <taxon>Sophophora</taxon>
    </lineage>
</organism>